<feature type="chain" id="PRO_0000086539" description="Serine/threonine-protein kinase 1">
    <location>
        <begin position="1"/>
        <end position="298"/>
    </location>
</feature>
<feature type="domain" description="Protein kinase" evidence="2">
    <location>
        <begin position="38"/>
        <end position="276"/>
    </location>
</feature>
<feature type="active site" description="Proton acceptor" evidence="2 3">
    <location>
        <position position="152"/>
    </location>
</feature>
<feature type="binding site" evidence="2">
    <location>
        <begin position="45"/>
        <end position="53"/>
    </location>
    <ligand>
        <name>ATP</name>
        <dbReference type="ChEBI" id="CHEBI:30616"/>
    </ligand>
</feature>
<feature type="binding site" evidence="2">
    <location>
        <position position="65"/>
    </location>
    <ligand>
        <name>ATP</name>
        <dbReference type="ChEBI" id="CHEBI:30616"/>
    </ligand>
</feature>
<comment type="function">
    <text evidence="1">Essential for viral replication. It may mediate the virus progression through DNA replication (By similarity).</text>
</comment>
<comment type="catalytic activity">
    <reaction>
        <text>L-seryl-[protein] + ATP = O-phospho-L-seryl-[protein] + ADP + H(+)</text>
        <dbReference type="Rhea" id="RHEA:17989"/>
        <dbReference type="Rhea" id="RHEA-COMP:9863"/>
        <dbReference type="Rhea" id="RHEA-COMP:11604"/>
        <dbReference type="ChEBI" id="CHEBI:15378"/>
        <dbReference type="ChEBI" id="CHEBI:29999"/>
        <dbReference type="ChEBI" id="CHEBI:30616"/>
        <dbReference type="ChEBI" id="CHEBI:83421"/>
        <dbReference type="ChEBI" id="CHEBI:456216"/>
        <dbReference type="EC" id="2.7.11.1"/>
    </reaction>
</comment>
<comment type="catalytic activity">
    <reaction>
        <text>L-threonyl-[protein] + ATP = O-phospho-L-threonyl-[protein] + ADP + H(+)</text>
        <dbReference type="Rhea" id="RHEA:46608"/>
        <dbReference type="Rhea" id="RHEA-COMP:11060"/>
        <dbReference type="Rhea" id="RHEA-COMP:11605"/>
        <dbReference type="ChEBI" id="CHEBI:15378"/>
        <dbReference type="ChEBI" id="CHEBI:30013"/>
        <dbReference type="ChEBI" id="CHEBI:30616"/>
        <dbReference type="ChEBI" id="CHEBI:61977"/>
        <dbReference type="ChEBI" id="CHEBI:456216"/>
        <dbReference type="EC" id="2.7.11.1"/>
    </reaction>
</comment>
<comment type="subcellular location">
    <subcellularLocation>
        <location evidence="4">Virion</location>
    </subcellularLocation>
    <subcellularLocation>
        <location evidence="1">Host cytoplasm</location>
    </subcellularLocation>
</comment>
<comment type="induction">
    <text evidence="5">Expressed in the late phase of the viral replicative cycle.</text>
</comment>
<comment type="similarity">
    <text evidence="2">Belongs to the protein kinase superfamily. Ser/Thr protein kinase family.</text>
</comment>
<evidence type="ECO:0000250" key="1"/>
<evidence type="ECO:0000255" key="2">
    <source>
        <dbReference type="PROSITE-ProRule" id="PRU00159"/>
    </source>
</evidence>
<evidence type="ECO:0000255" key="3">
    <source>
        <dbReference type="PROSITE-ProRule" id="PRU10027"/>
    </source>
</evidence>
<evidence type="ECO:0000269" key="4">
    <source>
    </source>
</evidence>
<evidence type="ECO:0000269" key="5">
    <source>
    </source>
</evidence>
<dbReference type="EC" id="2.7.11.1"/>
<dbReference type="EMBL" id="U18466">
    <property type="protein sequence ID" value="AAA65349.1"/>
    <property type="molecule type" value="Genomic_DNA"/>
</dbReference>
<dbReference type="RefSeq" id="NP_042813.1">
    <property type="nucleotide sequence ID" value="NC_001659.2"/>
</dbReference>
<dbReference type="SMR" id="P42493"/>
<dbReference type="GeneID" id="22220350"/>
<dbReference type="KEGG" id="vg:22220350"/>
<dbReference type="Proteomes" id="UP000000624">
    <property type="component" value="Segment"/>
</dbReference>
<dbReference type="GO" id="GO:0030430">
    <property type="term" value="C:host cell cytoplasm"/>
    <property type="evidence" value="ECO:0007669"/>
    <property type="project" value="UniProtKB-SubCell"/>
</dbReference>
<dbReference type="GO" id="GO:0044423">
    <property type="term" value="C:virion component"/>
    <property type="evidence" value="ECO:0007669"/>
    <property type="project" value="UniProtKB-KW"/>
</dbReference>
<dbReference type="GO" id="GO:0005524">
    <property type="term" value="F:ATP binding"/>
    <property type="evidence" value="ECO:0007669"/>
    <property type="project" value="UniProtKB-KW"/>
</dbReference>
<dbReference type="GO" id="GO:0106310">
    <property type="term" value="F:protein serine kinase activity"/>
    <property type="evidence" value="ECO:0007669"/>
    <property type="project" value="RHEA"/>
</dbReference>
<dbReference type="GO" id="GO:0004674">
    <property type="term" value="F:protein serine/threonine kinase activity"/>
    <property type="evidence" value="ECO:0007669"/>
    <property type="project" value="UniProtKB-KW"/>
</dbReference>
<dbReference type="GO" id="GO:0016032">
    <property type="term" value="P:viral process"/>
    <property type="evidence" value="ECO:0007669"/>
    <property type="project" value="InterPro"/>
</dbReference>
<dbReference type="Gene3D" id="1.10.510.10">
    <property type="entry name" value="Transferase(Phosphotransferase) domain 1"/>
    <property type="match status" value="1"/>
</dbReference>
<dbReference type="InterPro" id="IPR011009">
    <property type="entry name" value="Kinase-like_dom_sf"/>
</dbReference>
<dbReference type="InterPro" id="IPR051138">
    <property type="entry name" value="PIM_Ser/Thr_kinase"/>
</dbReference>
<dbReference type="InterPro" id="IPR000719">
    <property type="entry name" value="Prot_kinase_dom"/>
</dbReference>
<dbReference type="InterPro" id="IPR008271">
    <property type="entry name" value="Ser/Thr_kinase_AS"/>
</dbReference>
<dbReference type="InterPro" id="IPR016254">
    <property type="entry name" value="Ser/Thr_kinase_asfivir"/>
</dbReference>
<dbReference type="PANTHER" id="PTHR22984:SF25">
    <property type="entry name" value="PROTEIN KINASE DOMAIN-CONTAINING PROTEIN"/>
    <property type="match status" value="1"/>
</dbReference>
<dbReference type="PANTHER" id="PTHR22984">
    <property type="entry name" value="SERINE/THREONINE-PROTEIN KINASE PIM"/>
    <property type="match status" value="1"/>
</dbReference>
<dbReference type="Pfam" id="PF00069">
    <property type="entry name" value="Pkinase"/>
    <property type="match status" value="1"/>
</dbReference>
<dbReference type="PIRSF" id="PIRSF000657">
    <property type="entry name" value="Ser/Thr_PK_ASFV"/>
    <property type="match status" value="1"/>
</dbReference>
<dbReference type="SMART" id="SM00220">
    <property type="entry name" value="S_TKc"/>
    <property type="match status" value="1"/>
</dbReference>
<dbReference type="SUPFAM" id="SSF56112">
    <property type="entry name" value="Protein kinase-like (PK-like)"/>
    <property type="match status" value="1"/>
</dbReference>
<dbReference type="PROSITE" id="PS50011">
    <property type="entry name" value="PROTEIN_KINASE_DOM"/>
    <property type="match status" value="1"/>
</dbReference>
<dbReference type="PROSITE" id="PS00108">
    <property type="entry name" value="PROTEIN_KINASE_ST"/>
    <property type="match status" value="1"/>
</dbReference>
<organism>
    <name type="scientific">African swine fever virus (strain Badajoz 1971 Vero-adapted)</name>
    <name type="common">Ba71V</name>
    <name type="synonym">ASFV</name>
    <dbReference type="NCBI Taxonomy" id="10498"/>
    <lineage>
        <taxon>Viruses</taxon>
        <taxon>Varidnaviria</taxon>
        <taxon>Bamfordvirae</taxon>
        <taxon>Nucleocytoviricota</taxon>
        <taxon>Pokkesviricetes</taxon>
        <taxon>Asfuvirales</taxon>
        <taxon>Asfarviridae</taxon>
        <taxon>Asfivirus</taxon>
        <taxon>African swine fever virus</taxon>
    </lineage>
</organism>
<keyword id="KW-0067">ATP-binding</keyword>
<keyword id="KW-1035">Host cytoplasm</keyword>
<keyword id="KW-0418">Kinase</keyword>
<keyword id="KW-0426">Late protein</keyword>
<keyword id="KW-0547">Nucleotide-binding</keyword>
<keyword id="KW-1185">Reference proteome</keyword>
<keyword id="KW-0723">Serine/threonine-protein kinase</keyword>
<keyword id="KW-0808">Transferase</keyword>
<keyword id="KW-0946">Virion</keyword>
<proteinExistence type="evidence at transcript level"/>
<protein>
    <recommendedName>
        <fullName>Serine/threonine-protein kinase 1</fullName>
        <ecNumber>2.7.11.1</ecNumber>
    </recommendedName>
</protein>
<reference key="1">
    <citation type="journal article" date="1995" name="Virology">
        <title>Analysis of the complete nucleotide sequence of African swine fever virus.</title>
        <authorList>
            <person name="Yanez R.J."/>
            <person name="Rodriguez J.M."/>
            <person name="Nogal M.L."/>
            <person name="Yuste L."/>
            <person name="Enriquez C."/>
            <person name="Rodriguez J.F."/>
            <person name="Vinuela E."/>
        </authorList>
    </citation>
    <scope>NUCLEOTIDE SEQUENCE [LARGE SCALE GENOMIC DNA]</scope>
</reference>
<reference key="2">
    <citation type="journal article" date="2018" name="J. Virol.">
        <title>A Proteomic Atlas of the African Swine Fever Virus Particle.</title>
        <authorList>
            <person name="Alejo A."/>
            <person name="Matamoros T."/>
            <person name="Guerra M."/>
            <person name="Andres G."/>
        </authorList>
    </citation>
    <scope>SUBCELLULAR LOCATION</scope>
</reference>
<reference key="3">
    <citation type="journal article" date="2020" name="J. Virol.">
        <title>The African Swine Fever Virus Transcriptome.</title>
        <authorList>
            <person name="Cackett G."/>
            <person name="Matelska D."/>
            <person name="Sykora M."/>
            <person name="Portugal R."/>
            <person name="Malecki M."/>
            <person name="Baehler J."/>
            <person name="Dixon L."/>
            <person name="Werner F."/>
        </authorList>
    </citation>
    <scope>INDUCTION</scope>
</reference>
<name>PK1_ASFB7</name>
<accession>P42493</accession>
<organismHost>
    <name type="scientific">Ornithodoros</name>
    <name type="common">relapsing fever ticks</name>
    <dbReference type="NCBI Taxonomy" id="6937"/>
</organismHost>
<organismHost>
    <name type="scientific">Sus scrofa</name>
    <name type="common">Pig</name>
    <dbReference type="NCBI Taxonomy" id="9823"/>
</organismHost>
<gene>
    <name type="ordered locus">Ba71V-121</name>
    <name type="ORF">R298L</name>
</gene>
<sequence>MSRPEQQLKKMLKTPQAQYAFYPTAKVERISTTQHMYFIATRPMFEGGRNNVFLGHQVGQPIIFKYVSKKEIPGNEVIVLKALQDTPGVIKLIEYTENAMYHILIIEYIPNSVDLLHYHYFKKLEETEAKKIIFQLILIIQNIYEKGFIHGDIKDENLIIDINQKIIKVIDFGSAVRLDETRPQYNMFGTWEYVCPEFYYYGYYYQLPLTVWTIGMVAVNLFRFRAENFYLNDILKRENYIPENISETGKQFITECLTINENKRLSFKSLVSHPWFKGLKKEIQPISELGVDYKNVIT</sequence>